<name>PP1RB_XENLA</name>
<proteinExistence type="inferred from homology"/>
<protein>
    <recommendedName>
        <fullName>E3 ubiquitin-protein ligase PPP1R11</fullName>
        <ecNumber>2.3.2.27</ecNumber>
    </recommendedName>
    <alternativeName>
        <fullName>Protein phosphatase 1 regulatory subunit 11</fullName>
    </alternativeName>
</protein>
<sequence>MAETSGPTAAGGSTSSTVTTESETQPEHRSLTLKLRKRKPDKKVEWTCDTVDNENLGRRSSKCCCIYEKPRPFGESSSESEDDDDCCESAHCIRGHKKATSGSKETPSSHHDKTGSMQH</sequence>
<reference key="1">
    <citation type="submission" date="2004-07" db="EMBL/GenBank/DDBJ databases">
        <authorList>
            <consortium name="NIH - Xenopus Gene Collection (XGC) project"/>
        </authorList>
    </citation>
    <scope>NUCLEOTIDE SEQUENCE [LARGE SCALE MRNA]</scope>
    <source>
        <tissue>Eye</tissue>
    </source>
</reference>
<feature type="chain" id="PRO_0000239625" description="E3 ubiquitin-protein ligase PPP1R11">
    <location>
        <begin position="1"/>
        <end position="119"/>
    </location>
</feature>
<feature type="region of interest" description="Disordered" evidence="2">
    <location>
        <begin position="1"/>
        <end position="42"/>
    </location>
</feature>
<feature type="region of interest" description="Atypical RING finger domain 1" evidence="1">
    <location>
        <begin position="55"/>
        <end position="65"/>
    </location>
</feature>
<feature type="region of interest" description="Atypical RING finger domain 2" evidence="1">
    <location>
        <begin position="87"/>
        <end position="96"/>
    </location>
</feature>
<feature type="region of interest" description="Disordered" evidence="2">
    <location>
        <begin position="96"/>
        <end position="119"/>
    </location>
</feature>
<feature type="compositionally biased region" description="Low complexity" evidence="2">
    <location>
        <begin position="1"/>
        <end position="23"/>
    </location>
</feature>
<feature type="compositionally biased region" description="Basic and acidic residues" evidence="2">
    <location>
        <begin position="107"/>
        <end position="119"/>
    </location>
</feature>
<organism>
    <name type="scientific">Xenopus laevis</name>
    <name type="common">African clawed frog</name>
    <dbReference type="NCBI Taxonomy" id="8355"/>
    <lineage>
        <taxon>Eukaryota</taxon>
        <taxon>Metazoa</taxon>
        <taxon>Chordata</taxon>
        <taxon>Craniata</taxon>
        <taxon>Vertebrata</taxon>
        <taxon>Euteleostomi</taxon>
        <taxon>Amphibia</taxon>
        <taxon>Batrachia</taxon>
        <taxon>Anura</taxon>
        <taxon>Pipoidea</taxon>
        <taxon>Pipidae</taxon>
        <taxon>Xenopodinae</taxon>
        <taxon>Xenopus</taxon>
        <taxon>Xenopus</taxon>
    </lineage>
</organism>
<accession>Q6DDH0</accession>
<evidence type="ECO:0000250" key="1">
    <source>
        <dbReference type="UniProtKB" id="O60927"/>
    </source>
</evidence>
<evidence type="ECO:0000256" key="2">
    <source>
        <dbReference type="SAM" id="MobiDB-lite"/>
    </source>
</evidence>
<dbReference type="EC" id="2.3.2.27"/>
<dbReference type="EMBL" id="BC077596">
    <property type="protein sequence ID" value="AAH77596.1"/>
    <property type="molecule type" value="mRNA"/>
</dbReference>
<dbReference type="RefSeq" id="NP_001086878.1">
    <property type="nucleotide sequence ID" value="NM_001093409.1"/>
</dbReference>
<dbReference type="SMR" id="Q6DDH0"/>
<dbReference type="DNASU" id="446713"/>
<dbReference type="GeneID" id="446713"/>
<dbReference type="KEGG" id="xla:446713"/>
<dbReference type="AGR" id="Xenbase:XB-GENE-999523"/>
<dbReference type="CTD" id="446713"/>
<dbReference type="Xenbase" id="XB-GENE-999523">
    <property type="gene designation" value="ppp1r11.L"/>
</dbReference>
<dbReference type="OMA" id="DEHDESC"/>
<dbReference type="OrthoDB" id="307488at2759"/>
<dbReference type="UniPathway" id="UPA00143"/>
<dbReference type="Proteomes" id="UP000186698">
    <property type="component" value="Chromosome 8L"/>
</dbReference>
<dbReference type="Bgee" id="446713">
    <property type="expression patterns" value="Expressed in muscle tissue and 19 other cell types or tissues"/>
</dbReference>
<dbReference type="GO" id="GO:0005634">
    <property type="term" value="C:nucleus"/>
    <property type="evidence" value="ECO:0000318"/>
    <property type="project" value="GO_Central"/>
</dbReference>
<dbReference type="GO" id="GO:0008157">
    <property type="term" value="F:protein phosphatase 1 binding"/>
    <property type="evidence" value="ECO:0000318"/>
    <property type="project" value="GO_Central"/>
</dbReference>
<dbReference type="GO" id="GO:0004865">
    <property type="term" value="F:protein serine/threonine phosphatase inhibitor activity"/>
    <property type="evidence" value="ECO:0000318"/>
    <property type="project" value="GO_Central"/>
</dbReference>
<dbReference type="GO" id="GO:0061630">
    <property type="term" value="F:ubiquitin protein ligase activity"/>
    <property type="evidence" value="ECO:0000250"/>
    <property type="project" value="UniProtKB"/>
</dbReference>
<dbReference type="GO" id="GO:0050830">
    <property type="term" value="P:defense response to Gram-positive bacterium"/>
    <property type="evidence" value="ECO:0000250"/>
    <property type="project" value="UniProtKB"/>
</dbReference>
<dbReference type="GO" id="GO:0001818">
    <property type="term" value="P:negative regulation of cytokine production"/>
    <property type="evidence" value="ECO:0000250"/>
    <property type="project" value="UniProtKB"/>
</dbReference>
<dbReference type="GO" id="GO:0016567">
    <property type="term" value="P:protein ubiquitination"/>
    <property type="evidence" value="ECO:0007669"/>
    <property type="project" value="UniProtKB-UniPathway"/>
</dbReference>
<dbReference type="GO" id="GO:0006511">
    <property type="term" value="P:ubiquitin-dependent protein catabolic process"/>
    <property type="evidence" value="ECO:0000250"/>
    <property type="project" value="UniProtKB"/>
</dbReference>
<dbReference type="InterPro" id="IPR011107">
    <property type="entry name" value="PPI_Ypi1"/>
</dbReference>
<dbReference type="PANTHER" id="PTHR20835:SF0">
    <property type="entry name" value="E3 UBIQUITIN-PROTEIN LIGASE PPP1R11"/>
    <property type="match status" value="1"/>
</dbReference>
<dbReference type="PANTHER" id="PTHR20835">
    <property type="entry name" value="E3 UBIQUITIN-PROTEIN LIGASE PPP1R11-RELATED"/>
    <property type="match status" value="1"/>
</dbReference>
<dbReference type="Pfam" id="PF07491">
    <property type="entry name" value="PPI_Ypi1"/>
    <property type="match status" value="1"/>
</dbReference>
<gene>
    <name type="primary">ppp1r11</name>
</gene>
<keyword id="KW-0650">Protein phosphatase inhibitor</keyword>
<keyword id="KW-1185">Reference proteome</keyword>
<keyword id="KW-0808">Transferase</keyword>
<keyword id="KW-0833">Ubl conjugation pathway</keyword>
<comment type="function">
    <text evidence="1">Atypical E3 ubiquitin-protein ligase which ubiquitinates TLR2 at 'Lys-754' leading to its degradation by the proteasome. Inhibitor of protein phosphatase 1.</text>
</comment>
<comment type="catalytic activity">
    <reaction evidence="1">
        <text>S-ubiquitinyl-[E2 ubiquitin-conjugating enzyme]-L-cysteine + [acceptor protein]-L-lysine = [E2 ubiquitin-conjugating enzyme]-L-cysteine + N(6)-ubiquitinyl-[acceptor protein]-L-lysine.</text>
        <dbReference type="EC" id="2.3.2.27"/>
    </reaction>
</comment>
<comment type="pathway">
    <text>Protein modification; protein ubiquitination.</text>
</comment>